<feature type="chain" id="PRO_1000099339" description="Bis(5'-nucleosyl)-tetraphosphatase, symmetrical">
    <location>
        <begin position="1"/>
        <end position="271"/>
    </location>
</feature>
<sequence length="271" mass="31213">MATYFVGDIQGCLDELLLLLERVEFNREKDQLWLTGDLVARGPKSLETLRFVKSLGNAAITILGNHDLHLLAVSQGISRVKEKDKTAPIFTAPDSEDLLTWLRHQPLLAVHSEYDIVMTHAGISPQWDMPTAIECAHEVESVLLSDKWVWLLENMYENHPDTWDVTLSGIERYRYIINAFTRMRFCHLDGRLDMECKLPPQDINNDELVPWFELENRLPLSHKVIFGHWAALMGHEGNNVIALDTGCVWGEYMTMYRIDDGKYFTQKAIEQ</sequence>
<name>APAH_ALIFM</name>
<comment type="function">
    <text evidence="1">Hydrolyzes diadenosine 5',5'''-P1,P4-tetraphosphate to yield ADP.</text>
</comment>
<comment type="catalytic activity">
    <reaction evidence="1">
        <text>P(1),P(4)-bis(5'-adenosyl) tetraphosphate + H2O = 2 ADP + 2 H(+)</text>
        <dbReference type="Rhea" id="RHEA:24252"/>
        <dbReference type="ChEBI" id="CHEBI:15377"/>
        <dbReference type="ChEBI" id="CHEBI:15378"/>
        <dbReference type="ChEBI" id="CHEBI:58141"/>
        <dbReference type="ChEBI" id="CHEBI:456216"/>
        <dbReference type="EC" id="3.6.1.41"/>
    </reaction>
</comment>
<comment type="similarity">
    <text evidence="1">Belongs to the Ap4A hydrolase family.</text>
</comment>
<reference key="1">
    <citation type="submission" date="2008-08" db="EMBL/GenBank/DDBJ databases">
        <title>Complete sequence of Vibrio fischeri strain MJ11.</title>
        <authorList>
            <person name="Mandel M.J."/>
            <person name="Stabb E.V."/>
            <person name="Ruby E.G."/>
            <person name="Ferriera S."/>
            <person name="Johnson J."/>
            <person name="Kravitz S."/>
            <person name="Beeson K."/>
            <person name="Sutton G."/>
            <person name="Rogers Y.-H."/>
            <person name="Friedman R."/>
            <person name="Frazier M."/>
            <person name="Venter J.C."/>
        </authorList>
    </citation>
    <scope>NUCLEOTIDE SEQUENCE [LARGE SCALE GENOMIC DNA]</scope>
    <source>
        <strain>MJ11</strain>
    </source>
</reference>
<proteinExistence type="inferred from homology"/>
<accession>B5FGG4</accession>
<protein>
    <recommendedName>
        <fullName evidence="1">Bis(5'-nucleosyl)-tetraphosphatase, symmetrical</fullName>
        <ecNumber evidence="1">3.6.1.41</ecNumber>
    </recommendedName>
    <alternativeName>
        <fullName evidence="1">Ap4A hydrolase</fullName>
    </alternativeName>
    <alternativeName>
        <fullName evidence="1">Diadenosine 5',5'''-P1,P4-tetraphosphate pyrophosphohydrolase</fullName>
    </alternativeName>
    <alternativeName>
        <fullName evidence="1">Diadenosine tetraphosphatase</fullName>
    </alternativeName>
</protein>
<keyword id="KW-0378">Hydrolase</keyword>
<evidence type="ECO:0000255" key="1">
    <source>
        <dbReference type="HAMAP-Rule" id="MF_00199"/>
    </source>
</evidence>
<gene>
    <name evidence="1" type="primary">apaH</name>
    <name type="ordered locus">VFMJ11_0273</name>
</gene>
<dbReference type="EC" id="3.6.1.41" evidence="1"/>
<dbReference type="EMBL" id="CP001139">
    <property type="protein sequence ID" value="ACH65029.1"/>
    <property type="molecule type" value="Genomic_DNA"/>
</dbReference>
<dbReference type="RefSeq" id="WP_012532780.1">
    <property type="nucleotide sequence ID" value="NC_011184.1"/>
</dbReference>
<dbReference type="SMR" id="B5FGG4"/>
<dbReference type="KEGG" id="vfm:VFMJ11_0273"/>
<dbReference type="HOGENOM" id="CLU_056184_2_0_6"/>
<dbReference type="Proteomes" id="UP000001857">
    <property type="component" value="Chromosome I"/>
</dbReference>
<dbReference type="GO" id="GO:0008803">
    <property type="term" value="F:bis(5'-nucleosyl)-tetraphosphatase (symmetrical) activity"/>
    <property type="evidence" value="ECO:0007669"/>
    <property type="project" value="UniProtKB-UniRule"/>
</dbReference>
<dbReference type="CDD" id="cd07422">
    <property type="entry name" value="MPP_ApaH"/>
    <property type="match status" value="1"/>
</dbReference>
<dbReference type="Gene3D" id="3.60.21.10">
    <property type="match status" value="1"/>
</dbReference>
<dbReference type="HAMAP" id="MF_00199">
    <property type="entry name" value="ApaH"/>
    <property type="match status" value="1"/>
</dbReference>
<dbReference type="InterPro" id="IPR004617">
    <property type="entry name" value="ApaH"/>
</dbReference>
<dbReference type="InterPro" id="IPR004843">
    <property type="entry name" value="Calcineurin-like_PHP_ApaH"/>
</dbReference>
<dbReference type="InterPro" id="IPR029052">
    <property type="entry name" value="Metallo-depent_PP-like"/>
</dbReference>
<dbReference type="NCBIfam" id="TIGR00668">
    <property type="entry name" value="apaH"/>
    <property type="match status" value="1"/>
</dbReference>
<dbReference type="NCBIfam" id="NF001204">
    <property type="entry name" value="PRK00166.1"/>
    <property type="match status" value="1"/>
</dbReference>
<dbReference type="PANTHER" id="PTHR40942">
    <property type="match status" value="1"/>
</dbReference>
<dbReference type="PANTHER" id="PTHR40942:SF4">
    <property type="entry name" value="CYTOCHROME C5"/>
    <property type="match status" value="1"/>
</dbReference>
<dbReference type="Pfam" id="PF00149">
    <property type="entry name" value="Metallophos"/>
    <property type="match status" value="1"/>
</dbReference>
<dbReference type="PIRSF" id="PIRSF000903">
    <property type="entry name" value="B5n-ttraPtase_sm"/>
    <property type="match status" value="1"/>
</dbReference>
<dbReference type="SUPFAM" id="SSF56300">
    <property type="entry name" value="Metallo-dependent phosphatases"/>
    <property type="match status" value="1"/>
</dbReference>
<organism>
    <name type="scientific">Aliivibrio fischeri (strain MJ11)</name>
    <name type="common">Vibrio fischeri</name>
    <dbReference type="NCBI Taxonomy" id="388396"/>
    <lineage>
        <taxon>Bacteria</taxon>
        <taxon>Pseudomonadati</taxon>
        <taxon>Pseudomonadota</taxon>
        <taxon>Gammaproteobacteria</taxon>
        <taxon>Vibrionales</taxon>
        <taxon>Vibrionaceae</taxon>
        <taxon>Aliivibrio</taxon>
    </lineage>
</organism>